<sequence length="217" mass="22698">MMSLGLVGRKVGMTRIFTAEGDSIPVTVLDVSDNRVTQIKTVETDGYTAVQVAFGSRRASRVTKPLAGHLAKAGVEAGEILKEFRIDAAKAAELSNGAVVGADLFEVGQKVDVQGVSIGKGYAGTIKRYNFSSGRATHGNSRSHNVPGSIGMAQDPGRVFPGKRMTGHLGDVTVTVQNLEIARIDAERKLLLVKGAIPGAKGGKVFVTPAVKTKGAK</sequence>
<gene>
    <name evidence="1" type="primary">rplC</name>
    <name type="ordered locus">Bcep1808_0330</name>
</gene>
<proteinExistence type="inferred from homology"/>
<dbReference type="EMBL" id="CP000614">
    <property type="protein sequence ID" value="ABO53343.1"/>
    <property type="molecule type" value="Genomic_DNA"/>
</dbReference>
<dbReference type="SMR" id="A4JAP0"/>
<dbReference type="KEGG" id="bvi:Bcep1808_0330"/>
<dbReference type="eggNOG" id="COG0087">
    <property type="taxonomic scope" value="Bacteria"/>
</dbReference>
<dbReference type="HOGENOM" id="CLU_044142_4_1_4"/>
<dbReference type="Proteomes" id="UP000002287">
    <property type="component" value="Chromosome 1"/>
</dbReference>
<dbReference type="GO" id="GO:0022625">
    <property type="term" value="C:cytosolic large ribosomal subunit"/>
    <property type="evidence" value="ECO:0007669"/>
    <property type="project" value="TreeGrafter"/>
</dbReference>
<dbReference type="GO" id="GO:0019843">
    <property type="term" value="F:rRNA binding"/>
    <property type="evidence" value="ECO:0007669"/>
    <property type="project" value="UniProtKB-UniRule"/>
</dbReference>
<dbReference type="GO" id="GO:0003735">
    <property type="term" value="F:structural constituent of ribosome"/>
    <property type="evidence" value="ECO:0007669"/>
    <property type="project" value="InterPro"/>
</dbReference>
<dbReference type="GO" id="GO:0006412">
    <property type="term" value="P:translation"/>
    <property type="evidence" value="ECO:0007669"/>
    <property type="project" value="UniProtKB-UniRule"/>
</dbReference>
<dbReference type="FunFam" id="2.40.30.10:FF:000004">
    <property type="entry name" value="50S ribosomal protein L3"/>
    <property type="match status" value="1"/>
</dbReference>
<dbReference type="FunFam" id="3.30.160.810:FF:000001">
    <property type="entry name" value="50S ribosomal protein L3"/>
    <property type="match status" value="1"/>
</dbReference>
<dbReference type="Gene3D" id="3.30.160.810">
    <property type="match status" value="1"/>
</dbReference>
<dbReference type="Gene3D" id="2.40.30.10">
    <property type="entry name" value="Translation factors"/>
    <property type="match status" value="1"/>
</dbReference>
<dbReference type="HAMAP" id="MF_01325_B">
    <property type="entry name" value="Ribosomal_uL3_B"/>
    <property type="match status" value="1"/>
</dbReference>
<dbReference type="InterPro" id="IPR000597">
    <property type="entry name" value="Ribosomal_uL3"/>
</dbReference>
<dbReference type="InterPro" id="IPR019927">
    <property type="entry name" value="Ribosomal_uL3_bac/org-type"/>
</dbReference>
<dbReference type="InterPro" id="IPR019926">
    <property type="entry name" value="Ribosomal_uL3_CS"/>
</dbReference>
<dbReference type="InterPro" id="IPR009000">
    <property type="entry name" value="Transl_B-barrel_sf"/>
</dbReference>
<dbReference type="NCBIfam" id="TIGR03625">
    <property type="entry name" value="L3_bact"/>
    <property type="match status" value="1"/>
</dbReference>
<dbReference type="PANTHER" id="PTHR11229">
    <property type="entry name" value="50S RIBOSOMAL PROTEIN L3"/>
    <property type="match status" value="1"/>
</dbReference>
<dbReference type="PANTHER" id="PTHR11229:SF16">
    <property type="entry name" value="LARGE RIBOSOMAL SUBUNIT PROTEIN UL3C"/>
    <property type="match status" value="1"/>
</dbReference>
<dbReference type="Pfam" id="PF00297">
    <property type="entry name" value="Ribosomal_L3"/>
    <property type="match status" value="1"/>
</dbReference>
<dbReference type="SUPFAM" id="SSF50447">
    <property type="entry name" value="Translation proteins"/>
    <property type="match status" value="1"/>
</dbReference>
<dbReference type="PROSITE" id="PS00474">
    <property type="entry name" value="RIBOSOMAL_L3"/>
    <property type="match status" value="1"/>
</dbReference>
<keyword id="KW-0488">Methylation</keyword>
<keyword id="KW-0687">Ribonucleoprotein</keyword>
<keyword id="KW-0689">Ribosomal protein</keyword>
<keyword id="KW-0694">RNA-binding</keyword>
<keyword id="KW-0699">rRNA-binding</keyword>
<evidence type="ECO:0000255" key="1">
    <source>
        <dbReference type="HAMAP-Rule" id="MF_01325"/>
    </source>
</evidence>
<evidence type="ECO:0000305" key="2"/>
<protein>
    <recommendedName>
        <fullName evidence="1">Large ribosomal subunit protein uL3</fullName>
    </recommendedName>
    <alternativeName>
        <fullName evidence="2">50S ribosomal protein L3</fullName>
    </alternativeName>
</protein>
<reference key="1">
    <citation type="submission" date="2007-03" db="EMBL/GenBank/DDBJ databases">
        <title>Complete sequence of chromosome 1 of Burkholderia vietnamiensis G4.</title>
        <authorList>
            <consortium name="US DOE Joint Genome Institute"/>
            <person name="Copeland A."/>
            <person name="Lucas S."/>
            <person name="Lapidus A."/>
            <person name="Barry K."/>
            <person name="Detter J.C."/>
            <person name="Glavina del Rio T."/>
            <person name="Hammon N."/>
            <person name="Israni S."/>
            <person name="Dalin E."/>
            <person name="Tice H."/>
            <person name="Pitluck S."/>
            <person name="Chain P."/>
            <person name="Malfatti S."/>
            <person name="Shin M."/>
            <person name="Vergez L."/>
            <person name="Schmutz J."/>
            <person name="Larimer F."/>
            <person name="Land M."/>
            <person name="Hauser L."/>
            <person name="Kyrpides N."/>
            <person name="Tiedje J."/>
            <person name="Richardson P."/>
        </authorList>
    </citation>
    <scope>NUCLEOTIDE SEQUENCE [LARGE SCALE GENOMIC DNA]</scope>
    <source>
        <strain>G4 / LMG 22486</strain>
    </source>
</reference>
<name>RL3_BURVG</name>
<comment type="function">
    <text evidence="1">One of the primary rRNA binding proteins, it binds directly near the 3'-end of the 23S rRNA, where it nucleates assembly of the 50S subunit.</text>
</comment>
<comment type="subunit">
    <text evidence="1">Part of the 50S ribosomal subunit. Forms a cluster with proteins L14 and L19.</text>
</comment>
<comment type="PTM">
    <text evidence="1">Methylated by PrmB.</text>
</comment>
<comment type="similarity">
    <text evidence="1">Belongs to the universal ribosomal protein uL3 family.</text>
</comment>
<accession>A4JAP0</accession>
<feature type="chain" id="PRO_1000052026" description="Large ribosomal subunit protein uL3">
    <location>
        <begin position="1"/>
        <end position="217"/>
    </location>
</feature>
<feature type="modified residue" description="N5-methylglutamine" evidence="1">
    <location>
        <position position="154"/>
    </location>
</feature>
<organism>
    <name type="scientific">Burkholderia vietnamiensis (strain G4 / LMG 22486)</name>
    <name type="common">Burkholderia cepacia (strain R1808)</name>
    <dbReference type="NCBI Taxonomy" id="269482"/>
    <lineage>
        <taxon>Bacteria</taxon>
        <taxon>Pseudomonadati</taxon>
        <taxon>Pseudomonadota</taxon>
        <taxon>Betaproteobacteria</taxon>
        <taxon>Burkholderiales</taxon>
        <taxon>Burkholderiaceae</taxon>
        <taxon>Burkholderia</taxon>
        <taxon>Burkholderia cepacia complex</taxon>
    </lineage>
</organism>